<organism>
    <name type="scientific">Fervidobacterium nodosum (strain ATCC 35602 / DSM 5306 / Rt17-B1)</name>
    <dbReference type="NCBI Taxonomy" id="381764"/>
    <lineage>
        <taxon>Bacteria</taxon>
        <taxon>Thermotogati</taxon>
        <taxon>Thermotogota</taxon>
        <taxon>Thermotogae</taxon>
        <taxon>Thermotogales</taxon>
        <taxon>Fervidobacteriaceae</taxon>
        <taxon>Fervidobacterium</taxon>
    </lineage>
</organism>
<feature type="chain" id="PRO_0000335845" description="Elongation factor G">
    <location>
        <begin position="1"/>
        <end position="691"/>
    </location>
</feature>
<feature type="domain" description="tr-type G">
    <location>
        <begin position="12"/>
        <end position="286"/>
    </location>
</feature>
<feature type="binding site" evidence="1">
    <location>
        <begin position="21"/>
        <end position="28"/>
    </location>
    <ligand>
        <name>GTP</name>
        <dbReference type="ChEBI" id="CHEBI:37565"/>
    </ligand>
</feature>
<feature type="binding site" evidence="1">
    <location>
        <begin position="85"/>
        <end position="89"/>
    </location>
    <ligand>
        <name>GTP</name>
        <dbReference type="ChEBI" id="CHEBI:37565"/>
    </ligand>
</feature>
<feature type="binding site" evidence="1">
    <location>
        <begin position="139"/>
        <end position="142"/>
    </location>
    <ligand>
        <name>GTP</name>
        <dbReference type="ChEBI" id="CHEBI:37565"/>
    </ligand>
</feature>
<reference key="1">
    <citation type="submission" date="2007-07" db="EMBL/GenBank/DDBJ databases">
        <title>Complete sequence of Fervidobacterium nodosum Rt17-B1.</title>
        <authorList>
            <consortium name="US DOE Joint Genome Institute"/>
            <person name="Copeland A."/>
            <person name="Lucas S."/>
            <person name="Lapidus A."/>
            <person name="Barry K."/>
            <person name="Glavina del Rio T."/>
            <person name="Dalin E."/>
            <person name="Tice H."/>
            <person name="Pitluck S."/>
            <person name="Saunders E."/>
            <person name="Brettin T."/>
            <person name="Bruce D."/>
            <person name="Detter J.C."/>
            <person name="Han C."/>
            <person name="Schmutz J."/>
            <person name="Larimer F."/>
            <person name="Land M."/>
            <person name="Hauser L."/>
            <person name="Kyrpides N."/>
            <person name="Mikhailova N."/>
            <person name="Nelson K."/>
            <person name="Gogarten J.P."/>
            <person name="Noll K."/>
            <person name="Richardson P."/>
        </authorList>
    </citation>
    <scope>NUCLEOTIDE SEQUENCE [LARGE SCALE GENOMIC DNA]</scope>
    <source>
        <strain>ATCC 35602 / DSM 5306 / Rt17-B1</strain>
    </source>
</reference>
<protein>
    <recommendedName>
        <fullName evidence="1">Elongation factor G</fullName>
        <shortName evidence="1">EF-G</shortName>
    </recommendedName>
</protein>
<comment type="function">
    <text evidence="1">Catalyzes the GTP-dependent ribosomal translocation step during translation elongation. During this step, the ribosome changes from the pre-translocational (PRE) to the post-translocational (POST) state as the newly formed A-site-bound peptidyl-tRNA and P-site-bound deacylated tRNA move to the P and E sites, respectively. Catalyzes the coordinated movement of the two tRNA molecules, the mRNA and conformational changes in the ribosome.</text>
</comment>
<comment type="subcellular location">
    <subcellularLocation>
        <location evidence="1">Cytoplasm</location>
    </subcellularLocation>
</comment>
<comment type="similarity">
    <text evidence="1">Belongs to the TRAFAC class translation factor GTPase superfamily. Classic translation factor GTPase family. EF-G/EF-2 subfamily.</text>
</comment>
<dbReference type="EMBL" id="CP000771">
    <property type="protein sequence ID" value="ABS60988.1"/>
    <property type="molecule type" value="Genomic_DNA"/>
</dbReference>
<dbReference type="RefSeq" id="WP_011994301.1">
    <property type="nucleotide sequence ID" value="NC_009718.1"/>
</dbReference>
<dbReference type="SMR" id="A7HM55"/>
<dbReference type="STRING" id="381764.Fnod_1141"/>
<dbReference type="KEGG" id="fno:Fnod_1141"/>
<dbReference type="eggNOG" id="COG0480">
    <property type="taxonomic scope" value="Bacteria"/>
</dbReference>
<dbReference type="HOGENOM" id="CLU_002794_4_1_0"/>
<dbReference type="OrthoDB" id="9804431at2"/>
<dbReference type="Proteomes" id="UP000002415">
    <property type="component" value="Chromosome"/>
</dbReference>
<dbReference type="GO" id="GO:0005737">
    <property type="term" value="C:cytoplasm"/>
    <property type="evidence" value="ECO:0007669"/>
    <property type="project" value="UniProtKB-SubCell"/>
</dbReference>
<dbReference type="GO" id="GO:0005525">
    <property type="term" value="F:GTP binding"/>
    <property type="evidence" value="ECO:0007669"/>
    <property type="project" value="UniProtKB-UniRule"/>
</dbReference>
<dbReference type="GO" id="GO:0003924">
    <property type="term" value="F:GTPase activity"/>
    <property type="evidence" value="ECO:0007669"/>
    <property type="project" value="InterPro"/>
</dbReference>
<dbReference type="GO" id="GO:0003746">
    <property type="term" value="F:translation elongation factor activity"/>
    <property type="evidence" value="ECO:0007669"/>
    <property type="project" value="UniProtKB-UniRule"/>
</dbReference>
<dbReference type="GO" id="GO:0032790">
    <property type="term" value="P:ribosome disassembly"/>
    <property type="evidence" value="ECO:0007669"/>
    <property type="project" value="TreeGrafter"/>
</dbReference>
<dbReference type="CDD" id="cd01886">
    <property type="entry name" value="EF-G"/>
    <property type="match status" value="1"/>
</dbReference>
<dbReference type="CDD" id="cd16262">
    <property type="entry name" value="EFG_III"/>
    <property type="match status" value="1"/>
</dbReference>
<dbReference type="CDD" id="cd01434">
    <property type="entry name" value="EFG_mtEFG1_IV"/>
    <property type="match status" value="1"/>
</dbReference>
<dbReference type="CDD" id="cd03713">
    <property type="entry name" value="EFG_mtEFG_C"/>
    <property type="match status" value="1"/>
</dbReference>
<dbReference type="CDD" id="cd04088">
    <property type="entry name" value="EFG_mtEFG_II"/>
    <property type="match status" value="1"/>
</dbReference>
<dbReference type="FunFam" id="2.40.30.10:FF:000006">
    <property type="entry name" value="Elongation factor G"/>
    <property type="match status" value="1"/>
</dbReference>
<dbReference type="FunFam" id="3.30.230.10:FF:000003">
    <property type="entry name" value="Elongation factor G"/>
    <property type="match status" value="1"/>
</dbReference>
<dbReference type="FunFam" id="3.30.70.240:FF:000001">
    <property type="entry name" value="Elongation factor G"/>
    <property type="match status" value="1"/>
</dbReference>
<dbReference type="FunFam" id="3.30.70.870:FF:000001">
    <property type="entry name" value="Elongation factor G"/>
    <property type="match status" value="1"/>
</dbReference>
<dbReference type="FunFam" id="3.40.50.300:FF:000029">
    <property type="entry name" value="Elongation factor G"/>
    <property type="match status" value="1"/>
</dbReference>
<dbReference type="Gene3D" id="3.30.230.10">
    <property type="match status" value="1"/>
</dbReference>
<dbReference type="Gene3D" id="3.30.70.240">
    <property type="match status" value="1"/>
</dbReference>
<dbReference type="Gene3D" id="3.30.70.870">
    <property type="entry name" value="Elongation Factor G (Translational Gtpase), domain 3"/>
    <property type="match status" value="1"/>
</dbReference>
<dbReference type="Gene3D" id="3.40.50.300">
    <property type="entry name" value="P-loop containing nucleotide triphosphate hydrolases"/>
    <property type="match status" value="1"/>
</dbReference>
<dbReference type="Gene3D" id="2.40.30.10">
    <property type="entry name" value="Translation factors"/>
    <property type="match status" value="1"/>
</dbReference>
<dbReference type="HAMAP" id="MF_00054_B">
    <property type="entry name" value="EF_G_EF_2_B"/>
    <property type="match status" value="1"/>
</dbReference>
<dbReference type="InterPro" id="IPR053905">
    <property type="entry name" value="EF-G-like_DII"/>
</dbReference>
<dbReference type="InterPro" id="IPR041095">
    <property type="entry name" value="EFG_II"/>
</dbReference>
<dbReference type="InterPro" id="IPR009022">
    <property type="entry name" value="EFG_III"/>
</dbReference>
<dbReference type="InterPro" id="IPR035647">
    <property type="entry name" value="EFG_III/V"/>
</dbReference>
<dbReference type="InterPro" id="IPR047872">
    <property type="entry name" value="EFG_IV"/>
</dbReference>
<dbReference type="InterPro" id="IPR035649">
    <property type="entry name" value="EFG_V"/>
</dbReference>
<dbReference type="InterPro" id="IPR000640">
    <property type="entry name" value="EFG_V-like"/>
</dbReference>
<dbReference type="InterPro" id="IPR031157">
    <property type="entry name" value="G_TR_CS"/>
</dbReference>
<dbReference type="InterPro" id="IPR027417">
    <property type="entry name" value="P-loop_NTPase"/>
</dbReference>
<dbReference type="InterPro" id="IPR020568">
    <property type="entry name" value="Ribosomal_Su5_D2-typ_SF"/>
</dbReference>
<dbReference type="InterPro" id="IPR014721">
    <property type="entry name" value="Ribsml_uS5_D2-typ_fold_subgr"/>
</dbReference>
<dbReference type="InterPro" id="IPR005225">
    <property type="entry name" value="Small_GTP-bd"/>
</dbReference>
<dbReference type="InterPro" id="IPR000795">
    <property type="entry name" value="T_Tr_GTP-bd_dom"/>
</dbReference>
<dbReference type="InterPro" id="IPR009000">
    <property type="entry name" value="Transl_B-barrel_sf"/>
</dbReference>
<dbReference type="InterPro" id="IPR004540">
    <property type="entry name" value="Transl_elong_EFG/EF2"/>
</dbReference>
<dbReference type="InterPro" id="IPR005517">
    <property type="entry name" value="Transl_elong_EFG/EF2_IV"/>
</dbReference>
<dbReference type="NCBIfam" id="TIGR00484">
    <property type="entry name" value="EF-G"/>
    <property type="match status" value="1"/>
</dbReference>
<dbReference type="NCBIfam" id="NF009379">
    <property type="entry name" value="PRK12740.1-3"/>
    <property type="match status" value="1"/>
</dbReference>
<dbReference type="NCBIfam" id="NF009381">
    <property type="entry name" value="PRK12740.1-5"/>
    <property type="match status" value="1"/>
</dbReference>
<dbReference type="NCBIfam" id="NF009891">
    <property type="entry name" value="PRK13351.1-1"/>
    <property type="match status" value="1"/>
</dbReference>
<dbReference type="NCBIfam" id="TIGR00231">
    <property type="entry name" value="small_GTP"/>
    <property type="match status" value="1"/>
</dbReference>
<dbReference type="PANTHER" id="PTHR43261:SF1">
    <property type="entry name" value="RIBOSOME-RELEASING FACTOR 2, MITOCHONDRIAL"/>
    <property type="match status" value="1"/>
</dbReference>
<dbReference type="PANTHER" id="PTHR43261">
    <property type="entry name" value="TRANSLATION ELONGATION FACTOR G-RELATED"/>
    <property type="match status" value="1"/>
</dbReference>
<dbReference type="Pfam" id="PF22042">
    <property type="entry name" value="EF-G_D2"/>
    <property type="match status" value="1"/>
</dbReference>
<dbReference type="Pfam" id="PF00679">
    <property type="entry name" value="EFG_C"/>
    <property type="match status" value="1"/>
</dbReference>
<dbReference type="Pfam" id="PF14492">
    <property type="entry name" value="EFG_III"/>
    <property type="match status" value="1"/>
</dbReference>
<dbReference type="Pfam" id="PF03764">
    <property type="entry name" value="EFG_IV"/>
    <property type="match status" value="1"/>
</dbReference>
<dbReference type="Pfam" id="PF00009">
    <property type="entry name" value="GTP_EFTU"/>
    <property type="match status" value="1"/>
</dbReference>
<dbReference type="PRINTS" id="PR00315">
    <property type="entry name" value="ELONGATNFCT"/>
</dbReference>
<dbReference type="SMART" id="SM00838">
    <property type="entry name" value="EFG_C"/>
    <property type="match status" value="1"/>
</dbReference>
<dbReference type="SMART" id="SM00889">
    <property type="entry name" value="EFG_IV"/>
    <property type="match status" value="1"/>
</dbReference>
<dbReference type="SUPFAM" id="SSF54980">
    <property type="entry name" value="EF-G C-terminal domain-like"/>
    <property type="match status" value="2"/>
</dbReference>
<dbReference type="SUPFAM" id="SSF52540">
    <property type="entry name" value="P-loop containing nucleoside triphosphate hydrolases"/>
    <property type="match status" value="1"/>
</dbReference>
<dbReference type="SUPFAM" id="SSF54211">
    <property type="entry name" value="Ribosomal protein S5 domain 2-like"/>
    <property type="match status" value="1"/>
</dbReference>
<dbReference type="SUPFAM" id="SSF50447">
    <property type="entry name" value="Translation proteins"/>
    <property type="match status" value="1"/>
</dbReference>
<dbReference type="PROSITE" id="PS00301">
    <property type="entry name" value="G_TR_1"/>
    <property type="match status" value="1"/>
</dbReference>
<dbReference type="PROSITE" id="PS51722">
    <property type="entry name" value="G_TR_2"/>
    <property type="match status" value="1"/>
</dbReference>
<name>EFG_FERNB</name>
<evidence type="ECO:0000255" key="1">
    <source>
        <dbReference type="HAMAP-Rule" id="MF_00054"/>
    </source>
</evidence>
<proteinExistence type="inferred from homology"/>
<gene>
    <name evidence="1" type="primary">fusA</name>
    <name type="ordered locus">Fnod_1141</name>
</gene>
<keyword id="KW-0963">Cytoplasm</keyword>
<keyword id="KW-0251">Elongation factor</keyword>
<keyword id="KW-0342">GTP-binding</keyword>
<keyword id="KW-0547">Nucleotide-binding</keyword>
<keyword id="KW-0648">Protein biosynthesis</keyword>
<keyword id="KW-1185">Reference proteome</keyword>
<accession>A7HM55</accession>
<sequence>MEEIKALYVDLNKLRNIGIMAHIDAGKTTTTERILYFTGRKHQIGSVDDGTATMDWMVQEKERGITITSAATTCLWKEHRINIIDTPGHVDFTIEVERSLRVLDGAVAVFDATAGVEPQSETVWRQADKYNVPRIAFMNKMDKTGADFEMAVQTMVERLGAHPIPVQLPMGAESDFAGVIDLIEMKAIRWLNPEGTEMVVEEIPTQWKDKADEAREDMIEKIAEVDDEIMEMYLEGEEPSIEQIHAALRRITIAGLGTPVFCGSAKMNLGIQPLLDGIVRYLPSPLDLPPVKGFDKAGNEIQVQPTENAPFVAYAFKIQTDPYVGKLTFLRVYSGKLEKGSYVINTTKGVKERVSRLIFLHADKREDVEYVRAGDIVGVIGMKSTITGDTVCEENTYVILEKMEFPEPVISIAIEPETKDDETKLSKALQSLLDEDPSLRAYVDQETGETILSGMGELHLEIIVDRLKREFNVNVRVGKPQVAYRETITKDVKIEGKYIRQSGGRGQYGHVVVQFEPLGLDKTFEFVDKTVGGVIPKQYIPAIEEGIREAMQVGVLAGYPVVGIKATLLDGSYHEVDSSEMAFKIAASMAFKEAMEKGNPVLLEPIMKVEVTTPEDYMGNIIADLNSRRAHIDALENRGHLRVVKALVPLSEMFGYATTLRSLSQGRANYTMVLSHYEKVPEKVAEKILKG</sequence>